<evidence type="ECO:0000255" key="1">
    <source>
        <dbReference type="HAMAP-Rule" id="MF_00044"/>
    </source>
</evidence>
<dbReference type="EC" id="6.1.1.12" evidence="1"/>
<dbReference type="EMBL" id="CP000647">
    <property type="protein sequence ID" value="ABR77806.1"/>
    <property type="molecule type" value="Genomic_DNA"/>
</dbReference>
<dbReference type="RefSeq" id="WP_002911479.1">
    <property type="nucleotide sequence ID" value="NC_009648.1"/>
</dbReference>
<dbReference type="SMR" id="A6TB35"/>
<dbReference type="STRING" id="272620.KPN_02380"/>
<dbReference type="jPOST" id="A6TB35"/>
<dbReference type="PaxDb" id="272620-KPN_02380"/>
<dbReference type="EnsemblBacteria" id="ABR77806">
    <property type="protein sequence ID" value="ABR77806"/>
    <property type="gene ID" value="KPN_02380"/>
</dbReference>
<dbReference type="KEGG" id="kpn:KPN_02380"/>
<dbReference type="HOGENOM" id="CLU_014330_3_2_6"/>
<dbReference type="Proteomes" id="UP000000265">
    <property type="component" value="Chromosome"/>
</dbReference>
<dbReference type="GO" id="GO:0005737">
    <property type="term" value="C:cytoplasm"/>
    <property type="evidence" value="ECO:0007669"/>
    <property type="project" value="UniProtKB-SubCell"/>
</dbReference>
<dbReference type="GO" id="GO:0004815">
    <property type="term" value="F:aspartate-tRNA ligase activity"/>
    <property type="evidence" value="ECO:0007669"/>
    <property type="project" value="UniProtKB-UniRule"/>
</dbReference>
<dbReference type="GO" id="GO:0005524">
    <property type="term" value="F:ATP binding"/>
    <property type="evidence" value="ECO:0007669"/>
    <property type="project" value="UniProtKB-UniRule"/>
</dbReference>
<dbReference type="GO" id="GO:0003676">
    <property type="term" value="F:nucleic acid binding"/>
    <property type="evidence" value="ECO:0007669"/>
    <property type="project" value="InterPro"/>
</dbReference>
<dbReference type="GO" id="GO:0006422">
    <property type="term" value="P:aspartyl-tRNA aminoacylation"/>
    <property type="evidence" value="ECO:0007669"/>
    <property type="project" value="UniProtKB-UniRule"/>
</dbReference>
<dbReference type="CDD" id="cd00777">
    <property type="entry name" value="AspRS_core"/>
    <property type="match status" value="1"/>
</dbReference>
<dbReference type="CDD" id="cd04317">
    <property type="entry name" value="EcAspRS_like_N"/>
    <property type="match status" value="1"/>
</dbReference>
<dbReference type="FunFam" id="2.40.50.140:FF:000080">
    <property type="entry name" value="Aspartate--tRNA ligase"/>
    <property type="match status" value="1"/>
</dbReference>
<dbReference type="FunFam" id="3.30.1360.30:FF:000001">
    <property type="entry name" value="Aspartate--tRNA ligase"/>
    <property type="match status" value="1"/>
</dbReference>
<dbReference type="Gene3D" id="3.30.930.10">
    <property type="entry name" value="Bira Bifunctional Protein, Domain 2"/>
    <property type="match status" value="1"/>
</dbReference>
<dbReference type="Gene3D" id="3.30.1360.30">
    <property type="entry name" value="GAD-like domain"/>
    <property type="match status" value="1"/>
</dbReference>
<dbReference type="Gene3D" id="2.40.50.140">
    <property type="entry name" value="Nucleic acid-binding proteins"/>
    <property type="match status" value="1"/>
</dbReference>
<dbReference type="HAMAP" id="MF_00044">
    <property type="entry name" value="Asp_tRNA_synth_type1"/>
    <property type="match status" value="1"/>
</dbReference>
<dbReference type="InterPro" id="IPR004364">
    <property type="entry name" value="Aa-tRNA-synt_II"/>
</dbReference>
<dbReference type="InterPro" id="IPR006195">
    <property type="entry name" value="aa-tRNA-synth_II"/>
</dbReference>
<dbReference type="InterPro" id="IPR045864">
    <property type="entry name" value="aa-tRNA-synth_II/BPL/LPL"/>
</dbReference>
<dbReference type="InterPro" id="IPR004524">
    <property type="entry name" value="Asp-tRNA-ligase_1"/>
</dbReference>
<dbReference type="InterPro" id="IPR047089">
    <property type="entry name" value="Asp-tRNA-ligase_1_N"/>
</dbReference>
<dbReference type="InterPro" id="IPR002312">
    <property type="entry name" value="Asp/Asn-tRNA-synth_IIb"/>
</dbReference>
<dbReference type="InterPro" id="IPR047090">
    <property type="entry name" value="AspRS_core"/>
</dbReference>
<dbReference type="InterPro" id="IPR004115">
    <property type="entry name" value="GAD-like_sf"/>
</dbReference>
<dbReference type="InterPro" id="IPR029351">
    <property type="entry name" value="GAD_dom"/>
</dbReference>
<dbReference type="InterPro" id="IPR012340">
    <property type="entry name" value="NA-bd_OB-fold"/>
</dbReference>
<dbReference type="InterPro" id="IPR004365">
    <property type="entry name" value="NA-bd_OB_tRNA"/>
</dbReference>
<dbReference type="NCBIfam" id="TIGR00459">
    <property type="entry name" value="aspS_bact"/>
    <property type="match status" value="1"/>
</dbReference>
<dbReference type="NCBIfam" id="NF001750">
    <property type="entry name" value="PRK00476.1"/>
    <property type="match status" value="1"/>
</dbReference>
<dbReference type="PANTHER" id="PTHR22594:SF5">
    <property type="entry name" value="ASPARTATE--TRNA LIGASE, MITOCHONDRIAL"/>
    <property type="match status" value="1"/>
</dbReference>
<dbReference type="PANTHER" id="PTHR22594">
    <property type="entry name" value="ASPARTYL/LYSYL-TRNA SYNTHETASE"/>
    <property type="match status" value="1"/>
</dbReference>
<dbReference type="Pfam" id="PF02938">
    <property type="entry name" value="GAD"/>
    <property type="match status" value="1"/>
</dbReference>
<dbReference type="Pfam" id="PF00152">
    <property type="entry name" value="tRNA-synt_2"/>
    <property type="match status" value="1"/>
</dbReference>
<dbReference type="Pfam" id="PF01336">
    <property type="entry name" value="tRNA_anti-codon"/>
    <property type="match status" value="1"/>
</dbReference>
<dbReference type="PRINTS" id="PR01042">
    <property type="entry name" value="TRNASYNTHASP"/>
</dbReference>
<dbReference type="SUPFAM" id="SSF55681">
    <property type="entry name" value="Class II aaRS and biotin synthetases"/>
    <property type="match status" value="1"/>
</dbReference>
<dbReference type="SUPFAM" id="SSF55261">
    <property type="entry name" value="GAD domain-like"/>
    <property type="match status" value="1"/>
</dbReference>
<dbReference type="SUPFAM" id="SSF50249">
    <property type="entry name" value="Nucleic acid-binding proteins"/>
    <property type="match status" value="1"/>
</dbReference>
<dbReference type="PROSITE" id="PS50862">
    <property type="entry name" value="AA_TRNA_LIGASE_II"/>
    <property type="match status" value="1"/>
</dbReference>
<name>SYD_KLEP7</name>
<keyword id="KW-0030">Aminoacyl-tRNA synthetase</keyword>
<keyword id="KW-0067">ATP-binding</keyword>
<keyword id="KW-0963">Cytoplasm</keyword>
<keyword id="KW-0436">Ligase</keyword>
<keyword id="KW-0547">Nucleotide-binding</keyword>
<keyword id="KW-0648">Protein biosynthesis</keyword>
<sequence length="595" mass="66415">MRTEYCGQLRQSHVGQQVTLCGWVNRRRDLGSLIFIDMRDREGIVQVFFDPDRADALKLASELRNEFCIQVTGTVRAREEKNINADMATGAIEVLASDLTIINRSESLPLDSNHVNTEEARLKYRYLDLRRPEMAQRLKTRAKITSFVRRFMDDHGFLDIETPMLTKATPEGARDYLVPSRVHKGKFYALPQSPQLFKQLLMMSGFDRYYQIVKCFRDEDLRADRQPEFTQIDVETSFMTAPQVREIMEAMVRQLWLEVKGVDLGEFPIMTFAEAERRYGSDKPDLRNPMELVDVADLLKSVEFAVFAGPANDPKGRVAALRVPGGASLTRKLIDEYGNFVKIYGAKGLAYIKVTERAKGMDGINSPVAKFLTAEIVEAILDRTGAQDGDMIFFGADNKKVVADALGALRLKLGKDLSLTDESKWAPLWVIDFPMFEDDGEGGLTAMHHPFTSPKDMTADELKAAPEEAVANAYDMVINGYEVGGGSVRIHRGEMQQTVFGILGINEQEQREKFGFLLDALKYGTPPHAGLAFGLDRLTMLLTGTDNIRDVIAFPKTTAAACLMTEAPSFANPAALGELGIQVVEKEAKASLENK</sequence>
<proteinExistence type="inferred from homology"/>
<feature type="chain" id="PRO_1000006689" description="Aspartate--tRNA ligase">
    <location>
        <begin position="1"/>
        <end position="595"/>
    </location>
</feature>
<feature type="region of interest" description="Aspartate" evidence="1">
    <location>
        <begin position="195"/>
        <end position="198"/>
    </location>
</feature>
<feature type="binding site" evidence="1">
    <location>
        <position position="171"/>
    </location>
    <ligand>
        <name>L-aspartate</name>
        <dbReference type="ChEBI" id="CHEBI:29991"/>
    </ligand>
</feature>
<feature type="binding site" evidence="1">
    <location>
        <begin position="217"/>
        <end position="219"/>
    </location>
    <ligand>
        <name>ATP</name>
        <dbReference type="ChEBI" id="CHEBI:30616"/>
    </ligand>
</feature>
<feature type="binding site" evidence="1">
    <location>
        <position position="217"/>
    </location>
    <ligand>
        <name>L-aspartate</name>
        <dbReference type="ChEBI" id="CHEBI:29991"/>
    </ligand>
</feature>
<feature type="binding site" evidence="1">
    <location>
        <position position="226"/>
    </location>
    <ligand>
        <name>ATP</name>
        <dbReference type="ChEBI" id="CHEBI:30616"/>
    </ligand>
</feature>
<feature type="binding site" evidence="1">
    <location>
        <position position="448"/>
    </location>
    <ligand>
        <name>L-aspartate</name>
        <dbReference type="ChEBI" id="CHEBI:29991"/>
    </ligand>
</feature>
<feature type="binding site" evidence="1">
    <location>
        <position position="482"/>
    </location>
    <ligand>
        <name>ATP</name>
        <dbReference type="ChEBI" id="CHEBI:30616"/>
    </ligand>
</feature>
<feature type="binding site" evidence="1">
    <location>
        <position position="489"/>
    </location>
    <ligand>
        <name>L-aspartate</name>
        <dbReference type="ChEBI" id="CHEBI:29991"/>
    </ligand>
</feature>
<feature type="binding site" evidence="1">
    <location>
        <begin position="534"/>
        <end position="537"/>
    </location>
    <ligand>
        <name>ATP</name>
        <dbReference type="ChEBI" id="CHEBI:30616"/>
    </ligand>
</feature>
<protein>
    <recommendedName>
        <fullName evidence="1">Aspartate--tRNA ligase</fullName>
        <ecNumber evidence="1">6.1.1.12</ecNumber>
    </recommendedName>
    <alternativeName>
        <fullName evidence="1">Aspartyl-tRNA synthetase</fullName>
        <shortName evidence="1">AspRS</shortName>
    </alternativeName>
</protein>
<comment type="function">
    <text evidence="1">Catalyzes the attachment of L-aspartate to tRNA(Asp) in a two-step reaction: L-aspartate is first activated by ATP to form Asp-AMP and then transferred to the acceptor end of tRNA(Asp).</text>
</comment>
<comment type="catalytic activity">
    <reaction evidence="1">
        <text>tRNA(Asp) + L-aspartate + ATP = L-aspartyl-tRNA(Asp) + AMP + diphosphate</text>
        <dbReference type="Rhea" id="RHEA:19649"/>
        <dbReference type="Rhea" id="RHEA-COMP:9660"/>
        <dbReference type="Rhea" id="RHEA-COMP:9678"/>
        <dbReference type="ChEBI" id="CHEBI:29991"/>
        <dbReference type="ChEBI" id="CHEBI:30616"/>
        <dbReference type="ChEBI" id="CHEBI:33019"/>
        <dbReference type="ChEBI" id="CHEBI:78442"/>
        <dbReference type="ChEBI" id="CHEBI:78516"/>
        <dbReference type="ChEBI" id="CHEBI:456215"/>
        <dbReference type="EC" id="6.1.1.12"/>
    </reaction>
</comment>
<comment type="subunit">
    <text evidence="1">Homodimer.</text>
</comment>
<comment type="subcellular location">
    <subcellularLocation>
        <location evidence="1">Cytoplasm</location>
    </subcellularLocation>
</comment>
<comment type="similarity">
    <text evidence="1">Belongs to the class-II aminoacyl-tRNA synthetase family. Type 1 subfamily.</text>
</comment>
<accession>A6TB35</accession>
<gene>
    <name evidence="1" type="primary">aspS</name>
    <name type="ordered locus">KPN78578_23450</name>
    <name type="ORF">KPN_02380</name>
</gene>
<organism>
    <name type="scientific">Klebsiella pneumoniae subsp. pneumoniae (strain ATCC 700721 / MGH 78578)</name>
    <dbReference type="NCBI Taxonomy" id="272620"/>
    <lineage>
        <taxon>Bacteria</taxon>
        <taxon>Pseudomonadati</taxon>
        <taxon>Pseudomonadota</taxon>
        <taxon>Gammaproteobacteria</taxon>
        <taxon>Enterobacterales</taxon>
        <taxon>Enterobacteriaceae</taxon>
        <taxon>Klebsiella/Raoultella group</taxon>
        <taxon>Klebsiella</taxon>
        <taxon>Klebsiella pneumoniae complex</taxon>
    </lineage>
</organism>
<reference key="1">
    <citation type="submission" date="2006-09" db="EMBL/GenBank/DDBJ databases">
        <authorList>
            <consortium name="The Klebsiella pneumonia Genome Sequencing Project"/>
            <person name="McClelland M."/>
            <person name="Sanderson E.K."/>
            <person name="Spieth J."/>
            <person name="Clifton W.S."/>
            <person name="Latreille P."/>
            <person name="Sabo A."/>
            <person name="Pepin K."/>
            <person name="Bhonagiri V."/>
            <person name="Porwollik S."/>
            <person name="Ali J."/>
            <person name="Wilson R.K."/>
        </authorList>
    </citation>
    <scope>NUCLEOTIDE SEQUENCE [LARGE SCALE GENOMIC DNA]</scope>
    <source>
        <strain>ATCC 700721 / MGH 78578</strain>
    </source>
</reference>